<comment type="function">
    <text evidence="1">Allows the formation of correctly charged Asn-tRNA(Asn) or Gln-tRNA(Gln) through the transamidation of misacylated Asp-tRNA(Asn) or Glu-tRNA(Gln) in organisms which lack either or both of asparaginyl-tRNA or glutaminyl-tRNA synthetases. The reaction takes place in the presence of glutamine and ATP through an activated phospho-Asp-tRNA(Asn) or phospho-Glu-tRNA(Gln).</text>
</comment>
<comment type="catalytic activity">
    <reaction evidence="1">
        <text>L-glutamyl-tRNA(Gln) + L-glutamine + ATP + H2O = L-glutaminyl-tRNA(Gln) + L-glutamate + ADP + phosphate + H(+)</text>
        <dbReference type="Rhea" id="RHEA:17521"/>
        <dbReference type="Rhea" id="RHEA-COMP:9681"/>
        <dbReference type="Rhea" id="RHEA-COMP:9684"/>
        <dbReference type="ChEBI" id="CHEBI:15377"/>
        <dbReference type="ChEBI" id="CHEBI:15378"/>
        <dbReference type="ChEBI" id="CHEBI:29985"/>
        <dbReference type="ChEBI" id="CHEBI:30616"/>
        <dbReference type="ChEBI" id="CHEBI:43474"/>
        <dbReference type="ChEBI" id="CHEBI:58359"/>
        <dbReference type="ChEBI" id="CHEBI:78520"/>
        <dbReference type="ChEBI" id="CHEBI:78521"/>
        <dbReference type="ChEBI" id="CHEBI:456216"/>
    </reaction>
</comment>
<comment type="catalytic activity">
    <reaction evidence="1">
        <text>L-aspartyl-tRNA(Asn) + L-glutamine + ATP + H2O = L-asparaginyl-tRNA(Asn) + L-glutamate + ADP + phosphate + 2 H(+)</text>
        <dbReference type="Rhea" id="RHEA:14513"/>
        <dbReference type="Rhea" id="RHEA-COMP:9674"/>
        <dbReference type="Rhea" id="RHEA-COMP:9677"/>
        <dbReference type="ChEBI" id="CHEBI:15377"/>
        <dbReference type="ChEBI" id="CHEBI:15378"/>
        <dbReference type="ChEBI" id="CHEBI:29985"/>
        <dbReference type="ChEBI" id="CHEBI:30616"/>
        <dbReference type="ChEBI" id="CHEBI:43474"/>
        <dbReference type="ChEBI" id="CHEBI:58359"/>
        <dbReference type="ChEBI" id="CHEBI:78515"/>
        <dbReference type="ChEBI" id="CHEBI:78516"/>
        <dbReference type="ChEBI" id="CHEBI:456216"/>
    </reaction>
</comment>
<comment type="subunit">
    <text evidence="1">Heterotrimer of A, B and C subunits.</text>
</comment>
<comment type="similarity">
    <text evidence="1">Belongs to the GatB/GatE family. GatB subfamily.</text>
</comment>
<accession>Q83BM8</accession>
<organism>
    <name type="scientific">Coxiella burnetii (strain RSA 493 / Nine Mile phase I)</name>
    <dbReference type="NCBI Taxonomy" id="227377"/>
    <lineage>
        <taxon>Bacteria</taxon>
        <taxon>Pseudomonadati</taxon>
        <taxon>Pseudomonadota</taxon>
        <taxon>Gammaproteobacteria</taxon>
        <taxon>Legionellales</taxon>
        <taxon>Coxiellaceae</taxon>
        <taxon>Coxiella</taxon>
    </lineage>
</organism>
<sequence>MEWEPVIGLEVHVQLRTQSKIFSGAATAYGAEPNTQACAIDLGLPGVLPVLNKEAVKLAVCFGLSVNASIPPYSIFARKNYFYPDLPKGYQISQYNFPIVQNGHLDIENEDGTTKRIGITRAHLEEDAGKSFHEGMQGYSGIDFNRAGTPLLEIVSEPDIRSAQEAVAYLKALHSLVRYIGVSDANMQEGAFRCDVNISLRPKSEEKFGTRAEIKNVNSFRFVERAILFEINRQKEILENGGTIVQETRLYDAVQDETRSMRTKEEAHDYRYFPDPDLLPVEIGPEFIEAVKNQLPELPWEKRKRFAASYQLSNYDVKLLTTQIEIANYFETVLKIDKTIPPKLAANWINGDLAAALNKNNLSITQSPINAEQLAGLLHRIADNTLSGSMGKQVFETMWGGEGDADTIIERHGLKQITDTEALEKIIDEVIENNPTQVEQYRSGKDKLIAFFVGQVMKATKGKANPQQVNELFKKKL</sequence>
<protein>
    <recommendedName>
        <fullName evidence="1">Aspartyl/glutamyl-tRNA(Asn/Gln) amidotransferase subunit B</fullName>
        <shortName evidence="1">Asp/Glu-ADT subunit B</shortName>
        <ecNumber evidence="1">6.3.5.-</ecNumber>
    </recommendedName>
</protein>
<gene>
    <name evidence="1" type="primary">gatB</name>
    <name type="ordered locus">CBU_1475</name>
</gene>
<name>GATB_COXBU</name>
<proteinExistence type="inferred from homology"/>
<evidence type="ECO:0000255" key="1">
    <source>
        <dbReference type="HAMAP-Rule" id="MF_00121"/>
    </source>
</evidence>
<feature type="chain" id="PRO_0000148787" description="Aspartyl/glutamyl-tRNA(Asn/Gln) amidotransferase subunit B">
    <location>
        <begin position="1"/>
        <end position="477"/>
    </location>
</feature>
<keyword id="KW-0067">ATP-binding</keyword>
<keyword id="KW-0436">Ligase</keyword>
<keyword id="KW-0547">Nucleotide-binding</keyword>
<keyword id="KW-0648">Protein biosynthesis</keyword>
<keyword id="KW-1185">Reference proteome</keyword>
<reference key="1">
    <citation type="journal article" date="2003" name="Proc. Natl. Acad. Sci. U.S.A.">
        <title>Complete genome sequence of the Q-fever pathogen, Coxiella burnetii.</title>
        <authorList>
            <person name="Seshadri R."/>
            <person name="Paulsen I.T."/>
            <person name="Eisen J.A."/>
            <person name="Read T.D."/>
            <person name="Nelson K.E."/>
            <person name="Nelson W.C."/>
            <person name="Ward N.L."/>
            <person name="Tettelin H."/>
            <person name="Davidsen T.M."/>
            <person name="Beanan M.J."/>
            <person name="DeBoy R.T."/>
            <person name="Daugherty S.C."/>
            <person name="Brinkac L.M."/>
            <person name="Madupu R."/>
            <person name="Dodson R.J."/>
            <person name="Khouri H.M."/>
            <person name="Lee K.H."/>
            <person name="Carty H.A."/>
            <person name="Scanlan D."/>
            <person name="Heinzen R.A."/>
            <person name="Thompson H.A."/>
            <person name="Samuel J.E."/>
            <person name="Fraser C.M."/>
            <person name="Heidelberg J.F."/>
        </authorList>
    </citation>
    <scope>NUCLEOTIDE SEQUENCE [LARGE SCALE GENOMIC DNA]</scope>
    <source>
        <strain>RSA 493 / Nine Mile phase I</strain>
    </source>
</reference>
<dbReference type="EC" id="6.3.5.-" evidence="1"/>
<dbReference type="EMBL" id="AE016828">
    <property type="protein sequence ID" value="AAO90972.1"/>
    <property type="molecule type" value="Genomic_DNA"/>
</dbReference>
<dbReference type="RefSeq" id="NP_820458.1">
    <property type="nucleotide sequence ID" value="NC_002971.4"/>
</dbReference>
<dbReference type="RefSeq" id="WP_010958250.1">
    <property type="nucleotide sequence ID" value="NC_002971.4"/>
</dbReference>
<dbReference type="SMR" id="Q83BM8"/>
<dbReference type="STRING" id="227377.CBU_1475"/>
<dbReference type="DNASU" id="1209385"/>
<dbReference type="EnsemblBacteria" id="AAO90972">
    <property type="protein sequence ID" value="AAO90972"/>
    <property type="gene ID" value="CBU_1475"/>
</dbReference>
<dbReference type="GeneID" id="1209385"/>
<dbReference type="KEGG" id="cbu:CBU_1475"/>
<dbReference type="PATRIC" id="fig|227377.7.peg.1475"/>
<dbReference type="eggNOG" id="COG0064">
    <property type="taxonomic scope" value="Bacteria"/>
</dbReference>
<dbReference type="HOGENOM" id="CLU_019240_0_0_6"/>
<dbReference type="OrthoDB" id="9804078at2"/>
<dbReference type="Proteomes" id="UP000002671">
    <property type="component" value="Chromosome"/>
</dbReference>
<dbReference type="GO" id="GO:0050566">
    <property type="term" value="F:asparaginyl-tRNA synthase (glutamine-hydrolyzing) activity"/>
    <property type="evidence" value="ECO:0007669"/>
    <property type="project" value="RHEA"/>
</dbReference>
<dbReference type="GO" id="GO:0005524">
    <property type="term" value="F:ATP binding"/>
    <property type="evidence" value="ECO:0007669"/>
    <property type="project" value="UniProtKB-KW"/>
</dbReference>
<dbReference type="GO" id="GO:0050567">
    <property type="term" value="F:glutaminyl-tRNA synthase (glutamine-hydrolyzing) activity"/>
    <property type="evidence" value="ECO:0000318"/>
    <property type="project" value="GO_Central"/>
</dbReference>
<dbReference type="GO" id="GO:0070681">
    <property type="term" value="P:glutaminyl-tRNAGln biosynthesis via transamidation"/>
    <property type="evidence" value="ECO:0000318"/>
    <property type="project" value="GO_Central"/>
</dbReference>
<dbReference type="GO" id="GO:0006412">
    <property type="term" value="P:translation"/>
    <property type="evidence" value="ECO:0007669"/>
    <property type="project" value="UniProtKB-UniRule"/>
</dbReference>
<dbReference type="FunFam" id="1.10.10.410:FF:000001">
    <property type="entry name" value="Aspartyl/glutamyl-tRNA(Asn/Gln) amidotransferase subunit B"/>
    <property type="match status" value="1"/>
</dbReference>
<dbReference type="FunFam" id="1.10.150.380:FF:000001">
    <property type="entry name" value="Aspartyl/glutamyl-tRNA(Asn/Gln) amidotransferase subunit B"/>
    <property type="match status" value="1"/>
</dbReference>
<dbReference type="Gene3D" id="1.10.10.410">
    <property type="match status" value="1"/>
</dbReference>
<dbReference type="Gene3D" id="1.10.150.380">
    <property type="entry name" value="GatB domain, N-terminal subdomain"/>
    <property type="match status" value="1"/>
</dbReference>
<dbReference type="HAMAP" id="MF_00121">
    <property type="entry name" value="GatB"/>
    <property type="match status" value="1"/>
</dbReference>
<dbReference type="InterPro" id="IPR017959">
    <property type="entry name" value="Asn/Gln-tRNA_amidoTrfase_suB/E"/>
</dbReference>
<dbReference type="InterPro" id="IPR006075">
    <property type="entry name" value="Asn/Gln-tRNA_Trfase_suB/E_cat"/>
</dbReference>
<dbReference type="InterPro" id="IPR018027">
    <property type="entry name" value="Asn/Gln_amidotransferase"/>
</dbReference>
<dbReference type="InterPro" id="IPR003789">
    <property type="entry name" value="Asn/Gln_tRNA_amidoTrase-B-like"/>
</dbReference>
<dbReference type="InterPro" id="IPR004413">
    <property type="entry name" value="GatB"/>
</dbReference>
<dbReference type="InterPro" id="IPR042114">
    <property type="entry name" value="GatB_C_1"/>
</dbReference>
<dbReference type="InterPro" id="IPR023168">
    <property type="entry name" value="GatB_Yqey_C_2"/>
</dbReference>
<dbReference type="InterPro" id="IPR017958">
    <property type="entry name" value="Gln-tRNA_amidoTrfase_suB_CS"/>
</dbReference>
<dbReference type="InterPro" id="IPR014746">
    <property type="entry name" value="Gln_synth/guanido_kin_cat_dom"/>
</dbReference>
<dbReference type="NCBIfam" id="TIGR00133">
    <property type="entry name" value="gatB"/>
    <property type="match status" value="1"/>
</dbReference>
<dbReference type="NCBIfam" id="NF004012">
    <property type="entry name" value="PRK05477.1-2"/>
    <property type="match status" value="1"/>
</dbReference>
<dbReference type="NCBIfam" id="NF004014">
    <property type="entry name" value="PRK05477.1-4"/>
    <property type="match status" value="1"/>
</dbReference>
<dbReference type="NCBIfam" id="NF004015">
    <property type="entry name" value="PRK05477.1-5"/>
    <property type="match status" value="1"/>
</dbReference>
<dbReference type="PANTHER" id="PTHR11659">
    <property type="entry name" value="GLUTAMYL-TRNA GLN AMIDOTRANSFERASE SUBUNIT B MITOCHONDRIAL AND PROKARYOTIC PET112-RELATED"/>
    <property type="match status" value="1"/>
</dbReference>
<dbReference type="PANTHER" id="PTHR11659:SF0">
    <property type="entry name" value="GLUTAMYL-TRNA(GLN) AMIDOTRANSFERASE SUBUNIT B, MITOCHONDRIAL"/>
    <property type="match status" value="1"/>
</dbReference>
<dbReference type="Pfam" id="PF02934">
    <property type="entry name" value="GatB_N"/>
    <property type="match status" value="1"/>
</dbReference>
<dbReference type="Pfam" id="PF02637">
    <property type="entry name" value="GatB_Yqey"/>
    <property type="match status" value="1"/>
</dbReference>
<dbReference type="SMART" id="SM00845">
    <property type="entry name" value="GatB_Yqey"/>
    <property type="match status" value="1"/>
</dbReference>
<dbReference type="SUPFAM" id="SSF89095">
    <property type="entry name" value="GatB/YqeY motif"/>
    <property type="match status" value="1"/>
</dbReference>
<dbReference type="SUPFAM" id="SSF55931">
    <property type="entry name" value="Glutamine synthetase/guanido kinase"/>
    <property type="match status" value="1"/>
</dbReference>
<dbReference type="PROSITE" id="PS01234">
    <property type="entry name" value="GATB"/>
    <property type="match status" value="1"/>
</dbReference>